<protein>
    <recommendedName>
        <fullName evidence="1">Probable glycine dehydrogenase (decarboxylating) subunit 1</fullName>
        <ecNumber evidence="1">1.4.4.2</ecNumber>
    </recommendedName>
    <alternativeName>
        <fullName evidence="1">Glycine cleavage system P-protein subunit 1</fullName>
    </alternativeName>
    <alternativeName>
        <fullName evidence="1">Glycine decarboxylase subunit 1</fullName>
    </alternativeName>
    <alternativeName>
        <fullName evidence="1">Glycine dehydrogenase (aminomethyl-transferring) subunit 1</fullName>
    </alternativeName>
</protein>
<keyword id="KW-0560">Oxidoreductase</keyword>
<comment type="function">
    <text evidence="1">The glycine cleavage system catalyzes the degradation of glycine. The P protein binds the alpha-amino group of glycine through its pyridoxal phosphate cofactor; CO(2) is released and the remaining methylamine moiety is then transferred to the lipoamide cofactor of the H protein.</text>
</comment>
<comment type="catalytic activity">
    <reaction evidence="1">
        <text>N(6)-[(R)-lipoyl]-L-lysyl-[glycine-cleavage complex H protein] + glycine + H(+) = N(6)-[(R)-S(8)-aminomethyldihydrolipoyl]-L-lysyl-[glycine-cleavage complex H protein] + CO2</text>
        <dbReference type="Rhea" id="RHEA:24304"/>
        <dbReference type="Rhea" id="RHEA-COMP:10494"/>
        <dbReference type="Rhea" id="RHEA-COMP:10495"/>
        <dbReference type="ChEBI" id="CHEBI:15378"/>
        <dbReference type="ChEBI" id="CHEBI:16526"/>
        <dbReference type="ChEBI" id="CHEBI:57305"/>
        <dbReference type="ChEBI" id="CHEBI:83099"/>
        <dbReference type="ChEBI" id="CHEBI:83143"/>
        <dbReference type="EC" id="1.4.4.2"/>
    </reaction>
</comment>
<comment type="subunit">
    <text evidence="1">The glycine cleavage system is composed of four proteins: P, T, L and H. In this organism, the P 'protein' is a heterodimer of two subunits.</text>
</comment>
<comment type="similarity">
    <text evidence="1">Belongs to the GcvP family. N-terminal subunit subfamily.</text>
</comment>
<proteinExistence type="inferred from homology"/>
<gene>
    <name evidence="1" type="primary">gcvPA</name>
    <name type="ordered locus">LMHCC_1222</name>
</gene>
<organism>
    <name type="scientific">Listeria monocytogenes serotype 4a (strain HCC23)</name>
    <dbReference type="NCBI Taxonomy" id="552536"/>
    <lineage>
        <taxon>Bacteria</taxon>
        <taxon>Bacillati</taxon>
        <taxon>Bacillota</taxon>
        <taxon>Bacilli</taxon>
        <taxon>Bacillales</taxon>
        <taxon>Listeriaceae</taxon>
        <taxon>Listeria</taxon>
    </lineage>
</organism>
<dbReference type="EC" id="1.4.4.2" evidence="1"/>
<dbReference type="EMBL" id="CP001175">
    <property type="protein sequence ID" value="ACK39569.1"/>
    <property type="molecule type" value="Genomic_DNA"/>
</dbReference>
<dbReference type="RefSeq" id="WP_012581370.1">
    <property type="nucleotide sequence ID" value="NC_011660.1"/>
</dbReference>
<dbReference type="SMR" id="B8DFX9"/>
<dbReference type="KEGG" id="lmh:LMHCC_1222"/>
<dbReference type="HOGENOM" id="CLU_004620_0_2_9"/>
<dbReference type="GO" id="GO:0004375">
    <property type="term" value="F:glycine dehydrogenase (decarboxylating) activity"/>
    <property type="evidence" value="ECO:0007669"/>
    <property type="project" value="UniProtKB-EC"/>
</dbReference>
<dbReference type="GO" id="GO:0019464">
    <property type="term" value="P:glycine decarboxylation via glycine cleavage system"/>
    <property type="evidence" value="ECO:0007669"/>
    <property type="project" value="UniProtKB-UniRule"/>
</dbReference>
<dbReference type="GO" id="GO:0009116">
    <property type="term" value="P:nucleoside metabolic process"/>
    <property type="evidence" value="ECO:0007669"/>
    <property type="project" value="InterPro"/>
</dbReference>
<dbReference type="CDD" id="cd00613">
    <property type="entry name" value="GDC-P"/>
    <property type="match status" value="1"/>
</dbReference>
<dbReference type="FunFam" id="3.40.640.10:FF:000113">
    <property type="entry name" value="Probable glycine dehydrogenase (decarboxylating) subunit 1"/>
    <property type="match status" value="1"/>
</dbReference>
<dbReference type="FunFam" id="3.90.1150.10:FF:000116">
    <property type="entry name" value="Probable glycine dehydrogenase (decarboxylating) subunit 1"/>
    <property type="match status" value="1"/>
</dbReference>
<dbReference type="Gene3D" id="3.90.1150.10">
    <property type="entry name" value="Aspartate Aminotransferase, domain 1"/>
    <property type="match status" value="1"/>
</dbReference>
<dbReference type="Gene3D" id="3.40.640.10">
    <property type="entry name" value="Type I PLP-dependent aspartate aminotransferase-like (Major domain)"/>
    <property type="match status" value="1"/>
</dbReference>
<dbReference type="HAMAP" id="MF_00712">
    <property type="entry name" value="GcvPA"/>
    <property type="match status" value="1"/>
</dbReference>
<dbReference type="InterPro" id="IPR023010">
    <property type="entry name" value="GcvPA"/>
</dbReference>
<dbReference type="InterPro" id="IPR049315">
    <property type="entry name" value="GDC-P_N"/>
</dbReference>
<dbReference type="InterPro" id="IPR020581">
    <property type="entry name" value="GDC_P"/>
</dbReference>
<dbReference type="InterPro" id="IPR015424">
    <property type="entry name" value="PyrdxlP-dep_Trfase"/>
</dbReference>
<dbReference type="InterPro" id="IPR015421">
    <property type="entry name" value="PyrdxlP-dep_Trfase_major"/>
</dbReference>
<dbReference type="InterPro" id="IPR015422">
    <property type="entry name" value="PyrdxlP-dep_Trfase_small"/>
</dbReference>
<dbReference type="NCBIfam" id="NF001696">
    <property type="entry name" value="PRK00451.1"/>
    <property type="match status" value="1"/>
</dbReference>
<dbReference type="PANTHER" id="PTHR42806">
    <property type="entry name" value="GLYCINE CLEAVAGE SYSTEM P-PROTEIN"/>
    <property type="match status" value="1"/>
</dbReference>
<dbReference type="PANTHER" id="PTHR42806:SF1">
    <property type="entry name" value="GLYCINE DEHYDROGENASE (DECARBOXYLATING)"/>
    <property type="match status" value="1"/>
</dbReference>
<dbReference type="Pfam" id="PF02347">
    <property type="entry name" value="GDC-P"/>
    <property type="match status" value="1"/>
</dbReference>
<dbReference type="PIRSF" id="PIRSF006815">
    <property type="entry name" value="GcvPA"/>
    <property type="match status" value="1"/>
</dbReference>
<dbReference type="SUPFAM" id="SSF53383">
    <property type="entry name" value="PLP-dependent transferases"/>
    <property type="match status" value="1"/>
</dbReference>
<sequence>MAKHRYLPMTEQDEKEMLDVIGVKSIDDLFQDIPEKIRFKRDYDLKPAKSEPALLRELSKLASKNANTTEYASFLGAGVYSHYIPTVVDHVISRSEFYTAYTPYQPEISQGELQAIFEFQTMIAELTGMDLANSSMYDGGTALAEAAMLASGHTKRKKILISGAVHPESSNVLKTYATGQHIEVEVIPELDGKTDIEALKKALSDDIAGFVVQYPNFYGQVEPLAELEKLVHENNSLLLVSSNPLSLGLLTPPGEFGADIVVGDSQVFGIPESFGGPHCGFFAVTNKLMRKVPGRLVGETVDENGKRGYVLTLQAREQHIRRDKATSNICSNQALNALASSVAMATLGKTGLVEMAKQNLDKSHYAKQKFREKGFEVLFSDGFFNEFVVKLSKPIKEVNESLLDEGIIGGYDLGFYEEKYKHHMLVAVTEMRTKEEIDAFVASLEGAK</sequence>
<name>GCSPA_LISMH</name>
<accession>B8DFX9</accession>
<evidence type="ECO:0000255" key="1">
    <source>
        <dbReference type="HAMAP-Rule" id="MF_00712"/>
    </source>
</evidence>
<reference key="1">
    <citation type="journal article" date="2011" name="J. Bacteriol.">
        <title>Genome sequence of lineage III Listeria monocytogenes strain HCC23.</title>
        <authorList>
            <person name="Steele C.L."/>
            <person name="Donaldson J.R."/>
            <person name="Paul D."/>
            <person name="Banes M.M."/>
            <person name="Arick T."/>
            <person name="Bridges S.M."/>
            <person name="Lawrence M.L."/>
        </authorList>
    </citation>
    <scope>NUCLEOTIDE SEQUENCE [LARGE SCALE GENOMIC DNA]</scope>
    <source>
        <strain>HCC23</strain>
    </source>
</reference>
<feature type="chain" id="PRO_1000147988" description="Probable glycine dehydrogenase (decarboxylating) subunit 1">
    <location>
        <begin position="1"/>
        <end position="448"/>
    </location>
</feature>